<gene>
    <name evidence="1" type="primary">glsA</name>
    <name type="ordered locus">VC_0454</name>
</gene>
<proteinExistence type="inferred from homology"/>
<evidence type="ECO:0000255" key="1">
    <source>
        <dbReference type="HAMAP-Rule" id="MF_00313"/>
    </source>
</evidence>
<evidence type="ECO:0000305" key="2"/>
<protein>
    <recommendedName>
        <fullName evidence="1">Glutaminase</fullName>
        <ecNumber evidence="1">3.5.1.2</ecNumber>
    </recommendedName>
</protein>
<keyword id="KW-0378">Hydrolase</keyword>
<keyword id="KW-1185">Reference proteome</keyword>
<accession>Q9KUR1</accession>
<comment type="catalytic activity">
    <reaction evidence="1">
        <text>L-glutamine + H2O = L-glutamate + NH4(+)</text>
        <dbReference type="Rhea" id="RHEA:15889"/>
        <dbReference type="ChEBI" id="CHEBI:15377"/>
        <dbReference type="ChEBI" id="CHEBI:28938"/>
        <dbReference type="ChEBI" id="CHEBI:29985"/>
        <dbReference type="ChEBI" id="CHEBI:58359"/>
        <dbReference type="EC" id="3.5.1.2"/>
    </reaction>
</comment>
<comment type="subunit">
    <text evidence="1">Homotetramer.</text>
</comment>
<comment type="similarity">
    <text evidence="1">Belongs to the glutaminase family.</text>
</comment>
<comment type="sequence caution" evidence="2">
    <conflict type="erroneous initiation">
        <sequence resource="EMBL-CDS" id="AAF93627"/>
    </conflict>
</comment>
<reference key="1">
    <citation type="journal article" date="2000" name="Nature">
        <title>DNA sequence of both chromosomes of the cholera pathogen Vibrio cholerae.</title>
        <authorList>
            <person name="Heidelberg J.F."/>
            <person name="Eisen J.A."/>
            <person name="Nelson W.C."/>
            <person name="Clayton R.A."/>
            <person name="Gwinn M.L."/>
            <person name="Dodson R.J."/>
            <person name="Haft D.H."/>
            <person name="Hickey E.K."/>
            <person name="Peterson J.D."/>
            <person name="Umayam L.A."/>
            <person name="Gill S.R."/>
            <person name="Nelson K.E."/>
            <person name="Read T.D."/>
            <person name="Tettelin H."/>
            <person name="Richardson D.L."/>
            <person name="Ermolaeva M.D."/>
            <person name="Vamathevan J.J."/>
            <person name="Bass S."/>
            <person name="Qin H."/>
            <person name="Dragoi I."/>
            <person name="Sellers P."/>
            <person name="McDonald L.A."/>
            <person name="Utterback T.R."/>
            <person name="Fleischmann R.D."/>
            <person name="Nierman W.C."/>
            <person name="White O."/>
            <person name="Salzberg S.L."/>
            <person name="Smith H.O."/>
            <person name="Colwell R.R."/>
            <person name="Mekalanos J.J."/>
            <person name="Venter J.C."/>
            <person name="Fraser C.M."/>
        </authorList>
    </citation>
    <scope>NUCLEOTIDE SEQUENCE [LARGE SCALE GENOMIC DNA]</scope>
    <source>
        <strain>ATCC 39315 / El Tor Inaba N16961</strain>
    </source>
</reference>
<organism>
    <name type="scientific">Vibrio cholerae serotype O1 (strain ATCC 39315 / El Tor Inaba N16961)</name>
    <dbReference type="NCBI Taxonomy" id="243277"/>
    <lineage>
        <taxon>Bacteria</taxon>
        <taxon>Pseudomonadati</taxon>
        <taxon>Pseudomonadota</taxon>
        <taxon>Gammaproteobacteria</taxon>
        <taxon>Vibrionales</taxon>
        <taxon>Vibrionaceae</taxon>
        <taxon>Vibrio</taxon>
    </lineage>
</organism>
<dbReference type="EC" id="3.5.1.2" evidence="1"/>
<dbReference type="EMBL" id="AE003852">
    <property type="protein sequence ID" value="AAF93627.1"/>
    <property type="status" value="ALT_INIT"/>
    <property type="molecule type" value="Genomic_DNA"/>
</dbReference>
<dbReference type="PIR" id="F82320">
    <property type="entry name" value="F82320"/>
</dbReference>
<dbReference type="RefSeq" id="NP_230108.1">
    <property type="nucleotide sequence ID" value="NC_002505.1"/>
</dbReference>
<dbReference type="SMR" id="Q9KUR1"/>
<dbReference type="STRING" id="243277.VC_0454"/>
<dbReference type="DNASU" id="2615116"/>
<dbReference type="EnsemblBacteria" id="AAF93627">
    <property type="protein sequence ID" value="AAF93627"/>
    <property type="gene ID" value="VC_0454"/>
</dbReference>
<dbReference type="KEGG" id="vch:VC_0454"/>
<dbReference type="PATRIC" id="fig|243277.26.peg.427"/>
<dbReference type="eggNOG" id="COG2066">
    <property type="taxonomic scope" value="Bacteria"/>
</dbReference>
<dbReference type="HOGENOM" id="CLU_027932_1_1_6"/>
<dbReference type="Proteomes" id="UP000000584">
    <property type="component" value="Chromosome 1"/>
</dbReference>
<dbReference type="GO" id="GO:0004359">
    <property type="term" value="F:glutaminase activity"/>
    <property type="evidence" value="ECO:0000318"/>
    <property type="project" value="GO_Central"/>
</dbReference>
<dbReference type="GO" id="GO:0006537">
    <property type="term" value="P:glutamate biosynthetic process"/>
    <property type="evidence" value="ECO:0000318"/>
    <property type="project" value="GO_Central"/>
</dbReference>
<dbReference type="GO" id="GO:0006543">
    <property type="term" value="P:glutamine catabolic process"/>
    <property type="evidence" value="ECO:0000318"/>
    <property type="project" value="GO_Central"/>
</dbReference>
<dbReference type="FunFam" id="3.40.710.10:FF:000005">
    <property type="entry name" value="Glutaminase"/>
    <property type="match status" value="1"/>
</dbReference>
<dbReference type="Gene3D" id="3.40.710.10">
    <property type="entry name" value="DD-peptidase/beta-lactamase superfamily"/>
    <property type="match status" value="1"/>
</dbReference>
<dbReference type="HAMAP" id="MF_00313">
    <property type="entry name" value="Glutaminase"/>
    <property type="match status" value="1"/>
</dbReference>
<dbReference type="InterPro" id="IPR012338">
    <property type="entry name" value="Beta-lactam/transpept-like"/>
</dbReference>
<dbReference type="InterPro" id="IPR015868">
    <property type="entry name" value="Glutaminase"/>
</dbReference>
<dbReference type="NCBIfam" id="TIGR03814">
    <property type="entry name" value="Gln_ase"/>
    <property type="match status" value="1"/>
</dbReference>
<dbReference type="NCBIfam" id="NF002132">
    <property type="entry name" value="PRK00971.1-1"/>
    <property type="match status" value="1"/>
</dbReference>
<dbReference type="NCBIfam" id="NF002133">
    <property type="entry name" value="PRK00971.1-2"/>
    <property type="match status" value="1"/>
</dbReference>
<dbReference type="PANTHER" id="PTHR12544">
    <property type="entry name" value="GLUTAMINASE"/>
    <property type="match status" value="1"/>
</dbReference>
<dbReference type="PANTHER" id="PTHR12544:SF29">
    <property type="entry name" value="GLUTAMINASE"/>
    <property type="match status" value="1"/>
</dbReference>
<dbReference type="Pfam" id="PF04960">
    <property type="entry name" value="Glutaminase"/>
    <property type="match status" value="1"/>
</dbReference>
<dbReference type="SUPFAM" id="SSF56601">
    <property type="entry name" value="beta-lactamase/transpeptidase-like"/>
    <property type="match status" value="1"/>
</dbReference>
<feature type="chain" id="PRO_0000110629" description="Glutaminase">
    <location>
        <begin position="1"/>
        <end position="306"/>
    </location>
</feature>
<feature type="binding site" evidence="1">
    <location>
        <position position="64"/>
    </location>
    <ligand>
        <name>substrate</name>
    </ligand>
</feature>
<feature type="binding site" evidence="1">
    <location>
        <position position="115"/>
    </location>
    <ligand>
        <name>substrate</name>
    </ligand>
</feature>
<feature type="binding site" evidence="1">
    <location>
        <position position="159"/>
    </location>
    <ligand>
        <name>substrate</name>
    </ligand>
</feature>
<feature type="binding site" evidence="1">
    <location>
        <position position="166"/>
    </location>
    <ligand>
        <name>substrate</name>
    </ligand>
</feature>
<feature type="binding site" evidence="1">
    <location>
        <position position="190"/>
    </location>
    <ligand>
        <name>substrate</name>
    </ligand>
</feature>
<feature type="binding site" evidence="1">
    <location>
        <position position="242"/>
    </location>
    <ligand>
        <name>substrate</name>
    </ligand>
</feature>
<feature type="binding site" evidence="1">
    <location>
        <position position="260"/>
    </location>
    <ligand>
        <name>substrate</name>
    </ligand>
</feature>
<name>GLSA_VIBCH</name>
<sequence length="306" mass="32765">MKPTADILASIIEEVRPLTSKGIVADYIPALAKVPSDKLGIAVFTNQGEVITAGDAQEGFSIQSISKVLSLTLAMGLYQPDELWSRVGKEPSGQAFNSLIQLEMEQGIPRNPFINAGAIVVCDMLQSRLSAPRQRLLEFVRQLSGEPQIAYDKVVAASEMMHSDRNAAIAYLMRSFGNFHNEVIPVLHNYFHACALKMSCVELAKTFSYLANKGVSVVTGETVITPTQSKQTNALLATCGLYDGAGEFAYRVGMPGKSGVGGGIIAVVPGEMTIAVWSPALDQSGNSLAGTRALELLAQRIGRSIF</sequence>